<comment type="function">
    <text evidence="1">Catalyzes the 2-thiolation of uridine at the wobble position (U34) of tRNA, leading to the formation of s(2)U34.</text>
</comment>
<comment type="catalytic activity">
    <reaction evidence="1">
        <text>S-sulfanyl-L-cysteinyl-[protein] + uridine(34) in tRNA + AH2 + ATP = 2-thiouridine(34) in tRNA + L-cysteinyl-[protein] + A + AMP + diphosphate + H(+)</text>
        <dbReference type="Rhea" id="RHEA:47032"/>
        <dbReference type="Rhea" id="RHEA-COMP:10131"/>
        <dbReference type="Rhea" id="RHEA-COMP:11726"/>
        <dbReference type="Rhea" id="RHEA-COMP:11727"/>
        <dbReference type="Rhea" id="RHEA-COMP:11728"/>
        <dbReference type="ChEBI" id="CHEBI:13193"/>
        <dbReference type="ChEBI" id="CHEBI:15378"/>
        <dbReference type="ChEBI" id="CHEBI:17499"/>
        <dbReference type="ChEBI" id="CHEBI:29950"/>
        <dbReference type="ChEBI" id="CHEBI:30616"/>
        <dbReference type="ChEBI" id="CHEBI:33019"/>
        <dbReference type="ChEBI" id="CHEBI:61963"/>
        <dbReference type="ChEBI" id="CHEBI:65315"/>
        <dbReference type="ChEBI" id="CHEBI:87170"/>
        <dbReference type="ChEBI" id="CHEBI:456215"/>
        <dbReference type="EC" id="2.8.1.13"/>
    </reaction>
</comment>
<comment type="subcellular location">
    <subcellularLocation>
        <location evidence="1">Cytoplasm</location>
    </subcellularLocation>
</comment>
<comment type="similarity">
    <text evidence="1">Belongs to the MnmA/TRMU family.</text>
</comment>
<proteinExistence type="inferred from homology"/>
<keyword id="KW-0067">ATP-binding</keyword>
<keyword id="KW-0963">Cytoplasm</keyword>
<keyword id="KW-1015">Disulfide bond</keyword>
<keyword id="KW-0547">Nucleotide-binding</keyword>
<keyword id="KW-1185">Reference proteome</keyword>
<keyword id="KW-0694">RNA-binding</keyword>
<keyword id="KW-0808">Transferase</keyword>
<keyword id="KW-0819">tRNA processing</keyword>
<keyword id="KW-0820">tRNA-binding</keyword>
<reference key="1">
    <citation type="journal article" date="2003" name="Proc. Natl. Acad. Sci. U.S.A.">
        <title>Genome sequence of the cyanobacterium Prochlorococcus marinus SS120, a nearly minimal oxyphototrophic genome.</title>
        <authorList>
            <person name="Dufresne A."/>
            <person name="Salanoubat M."/>
            <person name="Partensky F."/>
            <person name="Artiguenave F."/>
            <person name="Axmann I.M."/>
            <person name="Barbe V."/>
            <person name="Duprat S."/>
            <person name="Galperin M.Y."/>
            <person name="Koonin E.V."/>
            <person name="Le Gall F."/>
            <person name="Makarova K.S."/>
            <person name="Ostrowski M."/>
            <person name="Oztas S."/>
            <person name="Robert C."/>
            <person name="Rogozin I.B."/>
            <person name="Scanlan D.J."/>
            <person name="Tandeau de Marsac N."/>
            <person name="Weissenbach J."/>
            <person name="Wincker P."/>
            <person name="Wolf Y.I."/>
            <person name="Hess W.R."/>
        </authorList>
    </citation>
    <scope>NUCLEOTIDE SEQUENCE [LARGE SCALE GENOMIC DNA]</scope>
    <source>
        <strain>SARG / CCMP1375 / SS120</strain>
    </source>
</reference>
<name>MNMA_PROMA</name>
<sequence length="406" mass="44983">MTITPKNKRTSSIPKSQTATIGGEEVLKKLKGVEGDHSIAVGLSGGVDSSLTAALLVEAGWNVEGITLWLMSGKGSCCTDGLVDAAGICEQLGIPHHVIDARETFQREIIESLVKGYQEGMTPSPCSKCNRFVKFSPILEWAEQNLGLKRIATGHYARIKHLQEPIKISSAKENQIRRHQLLRGLDQNKDQSYFLYDLSQEILEKVIFPLGELKKADTRKEASRIELRTAEKPESQDLCLAEHHGSMKAFLDEYISPRNGEILLSNGQLLGQHDGIEHFTIGQRKGLGIAWKEPLHVIEIQSSTNRVIVAPRSEASRDNCTVGSINWVSIEPPSKKTIVEVQLRYRSKPVLATLTPIKPLKKDIENDRPYRCNLQFQSEQFSITPGQAAVFYEGEILLGGGIIEGN</sequence>
<organism>
    <name type="scientific">Prochlorococcus marinus (strain SARG / CCMP1375 / SS120)</name>
    <dbReference type="NCBI Taxonomy" id="167539"/>
    <lineage>
        <taxon>Bacteria</taxon>
        <taxon>Bacillati</taxon>
        <taxon>Cyanobacteriota</taxon>
        <taxon>Cyanophyceae</taxon>
        <taxon>Synechococcales</taxon>
        <taxon>Prochlorococcaceae</taxon>
        <taxon>Prochlorococcus</taxon>
    </lineage>
</organism>
<accession>Q7VAT9</accession>
<evidence type="ECO:0000255" key="1">
    <source>
        <dbReference type="HAMAP-Rule" id="MF_00144"/>
    </source>
</evidence>
<gene>
    <name evidence="1" type="primary">mnmA</name>
    <name type="ordered locus">Pro_1365</name>
</gene>
<dbReference type="EC" id="2.8.1.13" evidence="1"/>
<dbReference type="EMBL" id="AE017126">
    <property type="protein sequence ID" value="AAQ00409.1"/>
    <property type="molecule type" value="Genomic_DNA"/>
</dbReference>
<dbReference type="RefSeq" id="NP_875756.1">
    <property type="nucleotide sequence ID" value="NC_005042.1"/>
</dbReference>
<dbReference type="RefSeq" id="WP_011125516.1">
    <property type="nucleotide sequence ID" value="NC_005042.1"/>
</dbReference>
<dbReference type="SMR" id="Q7VAT9"/>
<dbReference type="STRING" id="167539.Pro_1365"/>
<dbReference type="EnsemblBacteria" id="AAQ00409">
    <property type="protein sequence ID" value="AAQ00409"/>
    <property type="gene ID" value="Pro_1365"/>
</dbReference>
<dbReference type="KEGG" id="pma:Pro_1365"/>
<dbReference type="PATRIC" id="fig|167539.5.peg.1431"/>
<dbReference type="eggNOG" id="COG0482">
    <property type="taxonomic scope" value="Bacteria"/>
</dbReference>
<dbReference type="HOGENOM" id="CLU_035188_0_0_3"/>
<dbReference type="OrthoDB" id="9800696at2"/>
<dbReference type="Proteomes" id="UP000001420">
    <property type="component" value="Chromosome"/>
</dbReference>
<dbReference type="GO" id="GO:0005737">
    <property type="term" value="C:cytoplasm"/>
    <property type="evidence" value="ECO:0007669"/>
    <property type="project" value="UniProtKB-SubCell"/>
</dbReference>
<dbReference type="GO" id="GO:0005524">
    <property type="term" value="F:ATP binding"/>
    <property type="evidence" value="ECO:0007669"/>
    <property type="project" value="UniProtKB-KW"/>
</dbReference>
<dbReference type="GO" id="GO:0000049">
    <property type="term" value="F:tRNA binding"/>
    <property type="evidence" value="ECO:0007669"/>
    <property type="project" value="UniProtKB-KW"/>
</dbReference>
<dbReference type="GO" id="GO:0103016">
    <property type="term" value="F:tRNA-uridine 2-sulfurtransferase activity"/>
    <property type="evidence" value="ECO:0007669"/>
    <property type="project" value="UniProtKB-EC"/>
</dbReference>
<dbReference type="GO" id="GO:0002143">
    <property type="term" value="P:tRNA wobble position uridine thiolation"/>
    <property type="evidence" value="ECO:0007669"/>
    <property type="project" value="TreeGrafter"/>
</dbReference>
<dbReference type="CDD" id="cd01998">
    <property type="entry name" value="MnmA_TRMU-like"/>
    <property type="match status" value="1"/>
</dbReference>
<dbReference type="FunFam" id="2.30.30.280:FF:000001">
    <property type="entry name" value="tRNA-specific 2-thiouridylase MnmA"/>
    <property type="match status" value="1"/>
</dbReference>
<dbReference type="Gene3D" id="2.30.30.280">
    <property type="entry name" value="Adenine nucleotide alpha hydrolases-like domains"/>
    <property type="match status" value="1"/>
</dbReference>
<dbReference type="Gene3D" id="3.40.50.620">
    <property type="entry name" value="HUPs"/>
    <property type="match status" value="1"/>
</dbReference>
<dbReference type="Gene3D" id="2.40.30.10">
    <property type="entry name" value="Translation factors"/>
    <property type="match status" value="1"/>
</dbReference>
<dbReference type="HAMAP" id="MF_00144">
    <property type="entry name" value="tRNA_thiouridyl_MnmA"/>
    <property type="match status" value="1"/>
</dbReference>
<dbReference type="InterPro" id="IPR004506">
    <property type="entry name" value="MnmA-like"/>
</dbReference>
<dbReference type="InterPro" id="IPR046885">
    <property type="entry name" value="MnmA-like_C"/>
</dbReference>
<dbReference type="InterPro" id="IPR046884">
    <property type="entry name" value="MnmA-like_central"/>
</dbReference>
<dbReference type="InterPro" id="IPR023382">
    <property type="entry name" value="MnmA-like_central_sf"/>
</dbReference>
<dbReference type="InterPro" id="IPR014729">
    <property type="entry name" value="Rossmann-like_a/b/a_fold"/>
</dbReference>
<dbReference type="NCBIfam" id="NF001138">
    <property type="entry name" value="PRK00143.1"/>
    <property type="match status" value="1"/>
</dbReference>
<dbReference type="NCBIfam" id="TIGR00420">
    <property type="entry name" value="trmU"/>
    <property type="match status" value="1"/>
</dbReference>
<dbReference type="PANTHER" id="PTHR11933:SF5">
    <property type="entry name" value="MITOCHONDRIAL TRNA-SPECIFIC 2-THIOURIDYLASE 1"/>
    <property type="match status" value="1"/>
</dbReference>
<dbReference type="PANTHER" id="PTHR11933">
    <property type="entry name" value="TRNA 5-METHYLAMINOMETHYL-2-THIOURIDYLATE -METHYLTRANSFERASE"/>
    <property type="match status" value="1"/>
</dbReference>
<dbReference type="Pfam" id="PF03054">
    <property type="entry name" value="tRNA_Me_trans"/>
    <property type="match status" value="1"/>
</dbReference>
<dbReference type="Pfam" id="PF20258">
    <property type="entry name" value="tRNA_Me_trans_C"/>
    <property type="match status" value="1"/>
</dbReference>
<dbReference type="Pfam" id="PF20259">
    <property type="entry name" value="tRNA_Me_trans_M"/>
    <property type="match status" value="1"/>
</dbReference>
<dbReference type="SUPFAM" id="SSF52402">
    <property type="entry name" value="Adenine nucleotide alpha hydrolases-like"/>
    <property type="match status" value="1"/>
</dbReference>
<feature type="chain" id="PRO_0000349742" description="tRNA-specific 2-thiouridylase MnmA">
    <location>
        <begin position="1"/>
        <end position="406"/>
    </location>
</feature>
<feature type="region of interest" description="Interaction with tRNA" evidence="1">
    <location>
        <begin position="189"/>
        <end position="191"/>
    </location>
</feature>
<feature type="region of interest" description="Interaction with tRNA" evidence="1">
    <location>
        <begin position="344"/>
        <end position="345"/>
    </location>
</feature>
<feature type="active site" description="Nucleophile" evidence="1">
    <location>
        <position position="129"/>
    </location>
</feature>
<feature type="active site" description="Cysteine persulfide intermediate" evidence="1">
    <location>
        <position position="239"/>
    </location>
</feature>
<feature type="binding site" evidence="1">
    <location>
        <begin position="42"/>
        <end position="49"/>
    </location>
    <ligand>
        <name>ATP</name>
        <dbReference type="ChEBI" id="CHEBI:30616"/>
    </ligand>
</feature>
<feature type="binding site" evidence="1">
    <location>
        <position position="68"/>
    </location>
    <ligand>
        <name>ATP</name>
        <dbReference type="ChEBI" id="CHEBI:30616"/>
    </ligand>
</feature>
<feature type="binding site" evidence="1">
    <location>
        <position position="154"/>
    </location>
    <ligand>
        <name>ATP</name>
        <dbReference type="ChEBI" id="CHEBI:30616"/>
    </ligand>
</feature>
<feature type="site" description="Interaction with tRNA" evidence="1">
    <location>
        <position position="155"/>
    </location>
</feature>
<feature type="site" description="Interaction with tRNA" evidence="1">
    <location>
        <position position="387"/>
    </location>
</feature>
<feature type="disulfide bond" description="Alternate" evidence="1">
    <location>
        <begin position="129"/>
        <end position="239"/>
    </location>
</feature>
<protein>
    <recommendedName>
        <fullName evidence="1">tRNA-specific 2-thiouridylase MnmA</fullName>
        <ecNumber evidence="1">2.8.1.13</ecNumber>
    </recommendedName>
</protein>